<dbReference type="EC" id="1.2.1.38" evidence="1"/>
<dbReference type="EMBL" id="CP000095">
    <property type="protein sequence ID" value="AAZ57810.1"/>
    <property type="molecule type" value="Genomic_DNA"/>
</dbReference>
<dbReference type="RefSeq" id="WP_011293852.1">
    <property type="nucleotide sequence ID" value="NC_007335.2"/>
</dbReference>
<dbReference type="SMR" id="Q46L18"/>
<dbReference type="STRING" id="59920.PMN2A_0318"/>
<dbReference type="KEGG" id="pmn:PMN2A_0318"/>
<dbReference type="HOGENOM" id="CLU_006384_0_1_3"/>
<dbReference type="OrthoDB" id="9801289at2"/>
<dbReference type="PhylomeDB" id="Q46L18"/>
<dbReference type="UniPathway" id="UPA00068">
    <property type="reaction ID" value="UER00108"/>
</dbReference>
<dbReference type="Proteomes" id="UP000002535">
    <property type="component" value="Chromosome"/>
</dbReference>
<dbReference type="GO" id="GO:0005737">
    <property type="term" value="C:cytoplasm"/>
    <property type="evidence" value="ECO:0007669"/>
    <property type="project" value="UniProtKB-SubCell"/>
</dbReference>
<dbReference type="GO" id="GO:0003942">
    <property type="term" value="F:N-acetyl-gamma-glutamyl-phosphate reductase activity"/>
    <property type="evidence" value="ECO:0007669"/>
    <property type="project" value="UniProtKB-UniRule"/>
</dbReference>
<dbReference type="GO" id="GO:0051287">
    <property type="term" value="F:NAD binding"/>
    <property type="evidence" value="ECO:0007669"/>
    <property type="project" value="InterPro"/>
</dbReference>
<dbReference type="GO" id="GO:0070401">
    <property type="term" value="F:NADP+ binding"/>
    <property type="evidence" value="ECO:0007669"/>
    <property type="project" value="InterPro"/>
</dbReference>
<dbReference type="GO" id="GO:0006526">
    <property type="term" value="P:L-arginine biosynthetic process"/>
    <property type="evidence" value="ECO:0007669"/>
    <property type="project" value="UniProtKB-UniRule"/>
</dbReference>
<dbReference type="CDD" id="cd23934">
    <property type="entry name" value="AGPR_1_C"/>
    <property type="match status" value="1"/>
</dbReference>
<dbReference type="CDD" id="cd17895">
    <property type="entry name" value="AGPR_1_N"/>
    <property type="match status" value="1"/>
</dbReference>
<dbReference type="FunFam" id="3.30.360.10:FF:000014">
    <property type="entry name" value="N-acetyl-gamma-glutamyl-phosphate reductase"/>
    <property type="match status" value="1"/>
</dbReference>
<dbReference type="Gene3D" id="3.30.360.10">
    <property type="entry name" value="Dihydrodipicolinate Reductase, domain 2"/>
    <property type="match status" value="1"/>
</dbReference>
<dbReference type="Gene3D" id="3.40.50.720">
    <property type="entry name" value="NAD(P)-binding Rossmann-like Domain"/>
    <property type="match status" value="1"/>
</dbReference>
<dbReference type="HAMAP" id="MF_00150">
    <property type="entry name" value="ArgC_type1"/>
    <property type="match status" value="1"/>
</dbReference>
<dbReference type="InterPro" id="IPR023013">
    <property type="entry name" value="AGPR_AS"/>
</dbReference>
<dbReference type="InterPro" id="IPR000706">
    <property type="entry name" value="AGPR_type-1"/>
</dbReference>
<dbReference type="InterPro" id="IPR036291">
    <property type="entry name" value="NAD(P)-bd_dom_sf"/>
</dbReference>
<dbReference type="InterPro" id="IPR050085">
    <property type="entry name" value="NAGSA_dehydrogenase"/>
</dbReference>
<dbReference type="InterPro" id="IPR000534">
    <property type="entry name" value="Semialdehyde_DH_NAD-bd"/>
</dbReference>
<dbReference type="NCBIfam" id="TIGR01850">
    <property type="entry name" value="argC"/>
    <property type="match status" value="1"/>
</dbReference>
<dbReference type="PANTHER" id="PTHR32338:SF10">
    <property type="entry name" value="N-ACETYL-GAMMA-GLUTAMYL-PHOSPHATE REDUCTASE, CHLOROPLASTIC-RELATED"/>
    <property type="match status" value="1"/>
</dbReference>
<dbReference type="PANTHER" id="PTHR32338">
    <property type="entry name" value="N-ACETYL-GAMMA-GLUTAMYL-PHOSPHATE REDUCTASE, CHLOROPLASTIC-RELATED-RELATED"/>
    <property type="match status" value="1"/>
</dbReference>
<dbReference type="Pfam" id="PF01118">
    <property type="entry name" value="Semialdhyde_dh"/>
    <property type="match status" value="1"/>
</dbReference>
<dbReference type="Pfam" id="PF22698">
    <property type="entry name" value="Semialdhyde_dhC_1"/>
    <property type="match status" value="1"/>
</dbReference>
<dbReference type="SMART" id="SM00859">
    <property type="entry name" value="Semialdhyde_dh"/>
    <property type="match status" value="1"/>
</dbReference>
<dbReference type="SUPFAM" id="SSF55347">
    <property type="entry name" value="Glyceraldehyde-3-phosphate dehydrogenase-like, C-terminal domain"/>
    <property type="match status" value="1"/>
</dbReference>
<dbReference type="SUPFAM" id="SSF51735">
    <property type="entry name" value="NAD(P)-binding Rossmann-fold domains"/>
    <property type="match status" value="1"/>
</dbReference>
<dbReference type="PROSITE" id="PS01224">
    <property type="entry name" value="ARGC"/>
    <property type="match status" value="1"/>
</dbReference>
<evidence type="ECO:0000255" key="1">
    <source>
        <dbReference type="HAMAP-Rule" id="MF_00150"/>
    </source>
</evidence>
<keyword id="KW-0028">Amino-acid biosynthesis</keyword>
<keyword id="KW-0055">Arginine biosynthesis</keyword>
<keyword id="KW-0963">Cytoplasm</keyword>
<keyword id="KW-0521">NADP</keyword>
<keyword id="KW-0560">Oxidoreductase</keyword>
<keyword id="KW-1185">Reference proteome</keyword>
<reference key="1">
    <citation type="journal article" date="2007" name="PLoS Genet.">
        <title>Patterns and implications of gene gain and loss in the evolution of Prochlorococcus.</title>
        <authorList>
            <person name="Kettler G.C."/>
            <person name="Martiny A.C."/>
            <person name="Huang K."/>
            <person name="Zucker J."/>
            <person name="Coleman M.L."/>
            <person name="Rodrigue S."/>
            <person name="Chen F."/>
            <person name="Lapidus A."/>
            <person name="Ferriera S."/>
            <person name="Johnson J."/>
            <person name="Steglich C."/>
            <person name="Church G.M."/>
            <person name="Richardson P."/>
            <person name="Chisholm S.W."/>
        </authorList>
    </citation>
    <scope>NUCLEOTIDE SEQUENCE [LARGE SCALE GENOMIC DNA]</scope>
    <source>
        <strain>NATL2A</strain>
    </source>
</reference>
<protein>
    <recommendedName>
        <fullName evidence="1">N-acetyl-gamma-glutamyl-phosphate reductase</fullName>
        <shortName evidence="1">AGPR</shortName>
        <ecNumber evidence="1">1.2.1.38</ecNumber>
    </recommendedName>
    <alternativeName>
        <fullName evidence="1">N-acetyl-glutamate semialdehyde dehydrogenase</fullName>
        <shortName evidence="1">NAGSA dehydrogenase</shortName>
    </alternativeName>
</protein>
<sequence>MAISTLKTGRIAIIGASGYGGLQLVKLINEHPDFEISTLNGERSVGKNWNEINPFMKILGDKKITKSNIDEIALDSDYAILSLPNGLSSQLTPLLLKKGVKVLDLSADYRFKSLDKWKEVYTKEAAKYKRYDYDLCEEAIYGFSEEFSSEISKSRLIACPGCYPTASLSLLIPFLKQGLIESEGIIIDAKSGTSGGGRNPSEQLLLSECSESIRPYGVIGHRHTAEIESIASHFAGHQVNLQFTPHLVPMVRGILSTVYARLRDPGLTAEDCKIVIEAFYKDQPFIDILPVGTYPATKWVKNTNKVMISVEVDKRNGRIVLMSVIDNLLKGQAGQAIQNLNIMHGLESDIGLPKITFYP</sequence>
<accession>Q46L18</accession>
<feature type="chain" id="PRO_1000011036" description="N-acetyl-gamma-glutamyl-phosphate reductase">
    <location>
        <begin position="1"/>
        <end position="359"/>
    </location>
</feature>
<feature type="active site" evidence="1">
    <location>
        <position position="162"/>
    </location>
</feature>
<proteinExistence type="inferred from homology"/>
<gene>
    <name evidence="1" type="primary">argC</name>
    <name type="ordered locus">PMN2A_0318</name>
</gene>
<organism>
    <name type="scientific">Prochlorococcus marinus (strain NATL2A)</name>
    <dbReference type="NCBI Taxonomy" id="59920"/>
    <lineage>
        <taxon>Bacteria</taxon>
        <taxon>Bacillati</taxon>
        <taxon>Cyanobacteriota</taxon>
        <taxon>Cyanophyceae</taxon>
        <taxon>Synechococcales</taxon>
        <taxon>Prochlorococcaceae</taxon>
        <taxon>Prochlorococcus</taxon>
    </lineage>
</organism>
<name>ARGC_PROMT</name>
<comment type="function">
    <text evidence="1">Catalyzes the NADPH-dependent reduction of N-acetyl-5-glutamyl phosphate to yield N-acetyl-L-glutamate 5-semialdehyde.</text>
</comment>
<comment type="catalytic activity">
    <reaction evidence="1">
        <text>N-acetyl-L-glutamate 5-semialdehyde + phosphate + NADP(+) = N-acetyl-L-glutamyl 5-phosphate + NADPH + H(+)</text>
        <dbReference type="Rhea" id="RHEA:21588"/>
        <dbReference type="ChEBI" id="CHEBI:15378"/>
        <dbReference type="ChEBI" id="CHEBI:29123"/>
        <dbReference type="ChEBI" id="CHEBI:43474"/>
        <dbReference type="ChEBI" id="CHEBI:57783"/>
        <dbReference type="ChEBI" id="CHEBI:57936"/>
        <dbReference type="ChEBI" id="CHEBI:58349"/>
        <dbReference type="EC" id="1.2.1.38"/>
    </reaction>
</comment>
<comment type="pathway">
    <text evidence="1">Amino-acid biosynthesis; L-arginine biosynthesis; N(2)-acetyl-L-ornithine from L-glutamate: step 3/4.</text>
</comment>
<comment type="subcellular location">
    <subcellularLocation>
        <location evidence="1">Cytoplasm</location>
    </subcellularLocation>
</comment>
<comment type="similarity">
    <text evidence="1">Belongs to the NAGSA dehydrogenase family. Type 1 subfamily.</text>
</comment>